<sequence>MKKDVLTLGGHEFSSRFILGSGKYNLNLIKAAVENAGAQMITLALRRANTSGGENILDFIPEGVTLLPNTSGARNAEEAVRIARLARAMNCGDFVKVEIIHDSKYLLPDNYETIKATEILAKEGFIVMPYMHADLNVARDLVNAGAACIMPLASPIGSNKGLATKEFIKILVDEIDLPIIVDAGIGRPSQACEAMEMGVAAVMANTAIATAGDIPAMAGAFKQAIEAGRAAYLSGLGRVLDKGASASSPLTGFLED</sequence>
<name>THIG_CLOB8</name>
<reference key="1">
    <citation type="submission" date="2007-06" db="EMBL/GenBank/DDBJ databases">
        <title>Complete sequence of Clostridium beijerinckii NCIMB 8052.</title>
        <authorList>
            <consortium name="US DOE Joint Genome Institute"/>
            <person name="Copeland A."/>
            <person name="Lucas S."/>
            <person name="Lapidus A."/>
            <person name="Barry K."/>
            <person name="Detter J.C."/>
            <person name="Glavina del Rio T."/>
            <person name="Hammon N."/>
            <person name="Israni S."/>
            <person name="Dalin E."/>
            <person name="Tice H."/>
            <person name="Pitluck S."/>
            <person name="Sims D."/>
            <person name="Brettin T."/>
            <person name="Bruce D."/>
            <person name="Tapia R."/>
            <person name="Brainard J."/>
            <person name="Schmutz J."/>
            <person name="Larimer F."/>
            <person name="Land M."/>
            <person name="Hauser L."/>
            <person name="Kyrpides N."/>
            <person name="Mikhailova N."/>
            <person name="Bennet G."/>
            <person name="Cann I."/>
            <person name="Chen J.-S."/>
            <person name="Contreras A.L."/>
            <person name="Jones D."/>
            <person name="Kashket E."/>
            <person name="Mitchell W."/>
            <person name="Stoddard S."/>
            <person name="Schwarz W."/>
            <person name="Qureshi N."/>
            <person name="Young M."/>
            <person name="Shi Z."/>
            <person name="Ezeji T."/>
            <person name="White B."/>
            <person name="Blaschek H."/>
            <person name="Richardson P."/>
        </authorList>
    </citation>
    <scope>NUCLEOTIDE SEQUENCE [LARGE SCALE GENOMIC DNA]</scope>
    <source>
        <strain>ATCC 51743 / NCIMB 8052</strain>
    </source>
</reference>
<feature type="chain" id="PRO_1000196844" description="Thiazole synthase">
    <location>
        <begin position="1"/>
        <end position="256"/>
    </location>
</feature>
<feature type="active site" description="Schiff-base intermediate with DXP" evidence="1">
    <location>
        <position position="96"/>
    </location>
</feature>
<feature type="binding site" evidence="1">
    <location>
        <position position="157"/>
    </location>
    <ligand>
        <name>1-deoxy-D-xylulose 5-phosphate</name>
        <dbReference type="ChEBI" id="CHEBI:57792"/>
    </ligand>
</feature>
<feature type="binding site" evidence="1">
    <location>
        <begin position="183"/>
        <end position="184"/>
    </location>
    <ligand>
        <name>1-deoxy-D-xylulose 5-phosphate</name>
        <dbReference type="ChEBI" id="CHEBI:57792"/>
    </ligand>
</feature>
<feature type="binding site" evidence="1">
    <location>
        <begin position="205"/>
        <end position="206"/>
    </location>
    <ligand>
        <name>1-deoxy-D-xylulose 5-phosphate</name>
        <dbReference type="ChEBI" id="CHEBI:57792"/>
    </ligand>
</feature>
<dbReference type="EC" id="2.8.1.10" evidence="1"/>
<dbReference type="EMBL" id="CP000721">
    <property type="protein sequence ID" value="ABR33695.1"/>
    <property type="molecule type" value="Genomic_DNA"/>
</dbReference>
<dbReference type="RefSeq" id="WP_011968847.1">
    <property type="nucleotide sequence ID" value="NC_009617.1"/>
</dbReference>
<dbReference type="SMR" id="A6LTL5"/>
<dbReference type="KEGG" id="cbe:Cbei_1519"/>
<dbReference type="eggNOG" id="COG2022">
    <property type="taxonomic scope" value="Bacteria"/>
</dbReference>
<dbReference type="HOGENOM" id="CLU_062233_1_0_9"/>
<dbReference type="UniPathway" id="UPA00060"/>
<dbReference type="Proteomes" id="UP000000565">
    <property type="component" value="Chromosome"/>
</dbReference>
<dbReference type="GO" id="GO:0005737">
    <property type="term" value="C:cytoplasm"/>
    <property type="evidence" value="ECO:0007669"/>
    <property type="project" value="UniProtKB-SubCell"/>
</dbReference>
<dbReference type="GO" id="GO:1990107">
    <property type="term" value="F:thiazole synthase activity"/>
    <property type="evidence" value="ECO:0007669"/>
    <property type="project" value="UniProtKB-EC"/>
</dbReference>
<dbReference type="GO" id="GO:0009229">
    <property type="term" value="P:thiamine diphosphate biosynthetic process"/>
    <property type="evidence" value="ECO:0007669"/>
    <property type="project" value="UniProtKB-UniRule"/>
</dbReference>
<dbReference type="CDD" id="cd04728">
    <property type="entry name" value="ThiG"/>
    <property type="match status" value="1"/>
</dbReference>
<dbReference type="Gene3D" id="3.20.20.70">
    <property type="entry name" value="Aldolase class I"/>
    <property type="match status" value="1"/>
</dbReference>
<dbReference type="HAMAP" id="MF_00443">
    <property type="entry name" value="ThiG"/>
    <property type="match status" value="1"/>
</dbReference>
<dbReference type="InterPro" id="IPR013785">
    <property type="entry name" value="Aldolase_TIM"/>
</dbReference>
<dbReference type="InterPro" id="IPR033983">
    <property type="entry name" value="Thiazole_synthase_ThiG"/>
</dbReference>
<dbReference type="InterPro" id="IPR008867">
    <property type="entry name" value="ThiG"/>
</dbReference>
<dbReference type="PANTHER" id="PTHR34266">
    <property type="entry name" value="THIAZOLE SYNTHASE"/>
    <property type="match status" value="1"/>
</dbReference>
<dbReference type="PANTHER" id="PTHR34266:SF2">
    <property type="entry name" value="THIAZOLE SYNTHASE"/>
    <property type="match status" value="1"/>
</dbReference>
<dbReference type="Pfam" id="PF05690">
    <property type="entry name" value="ThiG"/>
    <property type="match status" value="1"/>
</dbReference>
<dbReference type="SUPFAM" id="SSF110399">
    <property type="entry name" value="ThiG-like"/>
    <property type="match status" value="1"/>
</dbReference>
<gene>
    <name evidence="1" type="primary">thiG</name>
    <name type="ordered locus">Cbei_1519</name>
</gene>
<protein>
    <recommendedName>
        <fullName evidence="1">Thiazole synthase</fullName>
        <ecNumber evidence="1">2.8.1.10</ecNumber>
    </recommendedName>
</protein>
<organism>
    <name type="scientific">Clostridium beijerinckii (strain ATCC 51743 / NCIMB 8052)</name>
    <name type="common">Clostridium acetobutylicum</name>
    <dbReference type="NCBI Taxonomy" id="290402"/>
    <lineage>
        <taxon>Bacteria</taxon>
        <taxon>Bacillati</taxon>
        <taxon>Bacillota</taxon>
        <taxon>Clostridia</taxon>
        <taxon>Eubacteriales</taxon>
        <taxon>Clostridiaceae</taxon>
        <taxon>Clostridium</taxon>
    </lineage>
</organism>
<keyword id="KW-0963">Cytoplasm</keyword>
<keyword id="KW-0704">Schiff base</keyword>
<keyword id="KW-0784">Thiamine biosynthesis</keyword>
<keyword id="KW-0808">Transferase</keyword>
<accession>A6LTL5</accession>
<proteinExistence type="inferred from homology"/>
<comment type="function">
    <text evidence="1">Catalyzes the rearrangement of 1-deoxy-D-xylulose 5-phosphate (DXP) to produce the thiazole phosphate moiety of thiamine. Sulfur is provided by the thiocarboxylate moiety of the carrier protein ThiS. In vitro, sulfur can be provided by H(2)S.</text>
</comment>
<comment type="catalytic activity">
    <reaction evidence="1">
        <text>[ThiS sulfur-carrier protein]-C-terminal-Gly-aminoethanethioate + 2-iminoacetate + 1-deoxy-D-xylulose 5-phosphate = [ThiS sulfur-carrier protein]-C-terminal Gly-Gly + 2-[(2R,5Z)-2-carboxy-4-methylthiazol-5(2H)-ylidene]ethyl phosphate + 2 H2O + H(+)</text>
        <dbReference type="Rhea" id="RHEA:26297"/>
        <dbReference type="Rhea" id="RHEA-COMP:12909"/>
        <dbReference type="Rhea" id="RHEA-COMP:19908"/>
        <dbReference type="ChEBI" id="CHEBI:15377"/>
        <dbReference type="ChEBI" id="CHEBI:15378"/>
        <dbReference type="ChEBI" id="CHEBI:57792"/>
        <dbReference type="ChEBI" id="CHEBI:62899"/>
        <dbReference type="ChEBI" id="CHEBI:77846"/>
        <dbReference type="ChEBI" id="CHEBI:90778"/>
        <dbReference type="ChEBI" id="CHEBI:232372"/>
        <dbReference type="EC" id="2.8.1.10"/>
    </reaction>
</comment>
<comment type="pathway">
    <text evidence="1">Cofactor biosynthesis; thiamine diphosphate biosynthesis.</text>
</comment>
<comment type="subunit">
    <text evidence="1">Homotetramer. Forms heterodimers with either ThiH or ThiS.</text>
</comment>
<comment type="subcellular location">
    <subcellularLocation>
        <location evidence="1">Cytoplasm</location>
    </subcellularLocation>
</comment>
<comment type="similarity">
    <text evidence="1">Belongs to the ThiG family.</text>
</comment>
<evidence type="ECO:0000255" key="1">
    <source>
        <dbReference type="HAMAP-Rule" id="MF_00443"/>
    </source>
</evidence>